<gene>
    <name type="ordered locus">YPTB3494</name>
</gene>
<name>Y3494_YERPS</name>
<reference key="1">
    <citation type="journal article" date="2004" name="Proc. Natl. Acad. Sci. U.S.A.">
        <title>Insights into the evolution of Yersinia pestis through whole-genome comparison with Yersinia pseudotuberculosis.</title>
        <authorList>
            <person name="Chain P.S.G."/>
            <person name="Carniel E."/>
            <person name="Larimer F.W."/>
            <person name="Lamerdin J."/>
            <person name="Stoutland P.O."/>
            <person name="Regala W.M."/>
            <person name="Georgescu A.M."/>
            <person name="Vergez L.M."/>
            <person name="Land M.L."/>
            <person name="Motin V.L."/>
            <person name="Brubaker R.R."/>
            <person name="Fowler J."/>
            <person name="Hinnebusch J."/>
            <person name="Marceau M."/>
            <person name="Medigue C."/>
            <person name="Simonet M."/>
            <person name="Chenal-Francisque V."/>
            <person name="Souza B."/>
            <person name="Dacheux D."/>
            <person name="Elliott J.M."/>
            <person name="Derbise A."/>
            <person name="Hauser L.J."/>
            <person name="Garcia E."/>
        </authorList>
    </citation>
    <scope>NUCLEOTIDE SEQUENCE [LARGE SCALE GENOMIC DNA]</scope>
    <source>
        <strain>IP32953</strain>
    </source>
</reference>
<feature type="chain" id="PRO_1000009283" description="UPF0102 protein YPTB3494">
    <location>
        <begin position="1"/>
        <end position="117"/>
    </location>
</feature>
<sequence>MSQRDTGAHYENLARRHLERAGLVFQAANVAFRGGEIDLIMRDGDAWVFVEVRFRRNDLFGGAAASITPRKQQRLHLAAAVWLAQRGASFATTSCRFDVVAITGNQLEWLPNAFNTD</sequence>
<dbReference type="EMBL" id="BX936398">
    <property type="protein sequence ID" value="CAH22732.1"/>
    <property type="molecule type" value="Genomic_DNA"/>
</dbReference>
<dbReference type="RefSeq" id="WP_002210147.1">
    <property type="nucleotide sequence ID" value="NZ_CP009712.1"/>
</dbReference>
<dbReference type="SMR" id="Q665M2"/>
<dbReference type="KEGG" id="ypo:BZ17_3108"/>
<dbReference type="KEGG" id="yps:YPTB3494"/>
<dbReference type="PATRIC" id="fig|273123.14.peg.3256"/>
<dbReference type="Proteomes" id="UP000001011">
    <property type="component" value="Chromosome"/>
</dbReference>
<dbReference type="GO" id="GO:0003676">
    <property type="term" value="F:nucleic acid binding"/>
    <property type="evidence" value="ECO:0007669"/>
    <property type="project" value="InterPro"/>
</dbReference>
<dbReference type="CDD" id="cd20736">
    <property type="entry name" value="PoNe_Nuclease"/>
    <property type="match status" value="1"/>
</dbReference>
<dbReference type="Gene3D" id="3.40.1350.10">
    <property type="match status" value="1"/>
</dbReference>
<dbReference type="HAMAP" id="MF_00048">
    <property type="entry name" value="UPF0102"/>
    <property type="match status" value="1"/>
</dbReference>
<dbReference type="InterPro" id="IPR011335">
    <property type="entry name" value="Restrct_endonuc-II-like"/>
</dbReference>
<dbReference type="InterPro" id="IPR011856">
    <property type="entry name" value="tRNA_endonuc-like_dom_sf"/>
</dbReference>
<dbReference type="InterPro" id="IPR003509">
    <property type="entry name" value="UPF0102_YraN-like"/>
</dbReference>
<dbReference type="NCBIfam" id="NF009150">
    <property type="entry name" value="PRK12497.1-3"/>
    <property type="match status" value="1"/>
</dbReference>
<dbReference type="NCBIfam" id="TIGR00252">
    <property type="entry name" value="YraN family protein"/>
    <property type="match status" value="1"/>
</dbReference>
<dbReference type="PANTHER" id="PTHR34039">
    <property type="entry name" value="UPF0102 PROTEIN YRAN"/>
    <property type="match status" value="1"/>
</dbReference>
<dbReference type="PANTHER" id="PTHR34039:SF1">
    <property type="entry name" value="UPF0102 PROTEIN YRAN"/>
    <property type="match status" value="1"/>
</dbReference>
<dbReference type="Pfam" id="PF02021">
    <property type="entry name" value="UPF0102"/>
    <property type="match status" value="1"/>
</dbReference>
<dbReference type="SUPFAM" id="SSF52980">
    <property type="entry name" value="Restriction endonuclease-like"/>
    <property type="match status" value="1"/>
</dbReference>
<proteinExistence type="inferred from homology"/>
<evidence type="ECO:0000255" key="1">
    <source>
        <dbReference type="HAMAP-Rule" id="MF_00048"/>
    </source>
</evidence>
<organism>
    <name type="scientific">Yersinia pseudotuberculosis serotype I (strain IP32953)</name>
    <dbReference type="NCBI Taxonomy" id="273123"/>
    <lineage>
        <taxon>Bacteria</taxon>
        <taxon>Pseudomonadati</taxon>
        <taxon>Pseudomonadota</taxon>
        <taxon>Gammaproteobacteria</taxon>
        <taxon>Enterobacterales</taxon>
        <taxon>Yersiniaceae</taxon>
        <taxon>Yersinia</taxon>
    </lineage>
</organism>
<accession>Q665M2</accession>
<protein>
    <recommendedName>
        <fullName evidence="1">UPF0102 protein YPTB3494</fullName>
    </recommendedName>
</protein>
<comment type="similarity">
    <text evidence="1">Belongs to the UPF0102 family.</text>
</comment>